<comment type="similarity">
    <text evidence="1">Belongs to the UPF0270 family.</text>
</comment>
<reference key="1">
    <citation type="journal article" date="2001" name="Nature">
        <title>Genome sequence of Yersinia pestis, the causative agent of plague.</title>
        <authorList>
            <person name="Parkhill J."/>
            <person name="Wren B.W."/>
            <person name="Thomson N.R."/>
            <person name="Titball R.W."/>
            <person name="Holden M.T.G."/>
            <person name="Prentice M.B."/>
            <person name="Sebaihia M."/>
            <person name="James K.D."/>
            <person name="Churcher C.M."/>
            <person name="Mungall K.L."/>
            <person name="Baker S."/>
            <person name="Basham D."/>
            <person name="Bentley S.D."/>
            <person name="Brooks K."/>
            <person name="Cerdeno-Tarraga A.-M."/>
            <person name="Chillingworth T."/>
            <person name="Cronin A."/>
            <person name="Davies R.M."/>
            <person name="Davis P."/>
            <person name="Dougan G."/>
            <person name="Feltwell T."/>
            <person name="Hamlin N."/>
            <person name="Holroyd S."/>
            <person name="Jagels K."/>
            <person name="Karlyshev A.V."/>
            <person name="Leather S."/>
            <person name="Moule S."/>
            <person name="Oyston P.C.F."/>
            <person name="Quail M.A."/>
            <person name="Rutherford K.M."/>
            <person name="Simmonds M."/>
            <person name="Skelton J."/>
            <person name="Stevens K."/>
            <person name="Whitehead S."/>
            <person name="Barrell B.G."/>
        </authorList>
    </citation>
    <scope>NUCLEOTIDE SEQUENCE [LARGE SCALE GENOMIC DNA]</scope>
    <source>
        <strain>CO-92 / Biovar Orientalis</strain>
    </source>
</reference>
<reference key="2">
    <citation type="journal article" date="2002" name="J. Bacteriol.">
        <title>Genome sequence of Yersinia pestis KIM.</title>
        <authorList>
            <person name="Deng W."/>
            <person name="Burland V."/>
            <person name="Plunkett G. III"/>
            <person name="Boutin A."/>
            <person name="Mayhew G.F."/>
            <person name="Liss P."/>
            <person name="Perna N.T."/>
            <person name="Rose D.J."/>
            <person name="Mau B."/>
            <person name="Zhou S."/>
            <person name="Schwartz D.C."/>
            <person name="Fetherston J.D."/>
            <person name="Lindler L.E."/>
            <person name="Brubaker R.R."/>
            <person name="Plano G.V."/>
            <person name="Straley S.C."/>
            <person name="McDonough K.A."/>
            <person name="Nilles M.L."/>
            <person name="Matson J.S."/>
            <person name="Blattner F.R."/>
            <person name="Perry R.D."/>
        </authorList>
    </citation>
    <scope>NUCLEOTIDE SEQUENCE [LARGE SCALE GENOMIC DNA]</scope>
    <source>
        <strain>KIM10+ / Biovar Mediaevalis</strain>
    </source>
</reference>
<reference key="3">
    <citation type="journal article" date="2004" name="DNA Res.">
        <title>Complete genome sequence of Yersinia pestis strain 91001, an isolate avirulent to humans.</title>
        <authorList>
            <person name="Song Y."/>
            <person name="Tong Z."/>
            <person name="Wang J."/>
            <person name="Wang L."/>
            <person name="Guo Z."/>
            <person name="Han Y."/>
            <person name="Zhang J."/>
            <person name="Pei D."/>
            <person name="Zhou D."/>
            <person name="Qin H."/>
            <person name="Pang X."/>
            <person name="Han Y."/>
            <person name="Zhai J."/>
            <person name="Li M."/>
            <person name="Cui B."/>
            <person name="Qi Z."/>
            <person name="Jin L."/>
            <person name="Dai R."/>
            <person name="Chen F."/>
            <person name="Li S."/>
            <person name="Ye C."/>
            <person name="Du Z."/>
            <person name="Lin W."/>
            <person name="Wang J."/>
            <person name="Yu J."/>
            <person name="Yang H."/>
            <person name="Wang J."/>
            <person name="Huang P."/>
            <person name="Yang R."/>
        </authorList>
    </citation>
    <scope>NUCLEOTIDE SEQUENCE [LARGE SCALE GENOMIC DNA]</scope>
    <source>
        <strain>91001 / Biovar Mediaevalis</strain>
    </source>
</reference>
<dbReference type="EMBL" id="AL590842">
    <property type="protein sequence ID" value="CAL18864.1"/>
    <property type="molecule type" value="Genomic_DNA"/>
</dbReference>
<dbReference type="EMBL" id="AE009952">
    <property type="protein sequence ID" value="AAM87504.1"/>
    <property type="molecule type" value="Genomic_DNA"/>
</dbReference>
<dbReference type="EMBL" id="AE017042">
    <property type="protein sequence ID" value="AAS60455.1"/>
    <property type="molecule type" value="Genomic_DNA"/>
</dbReference>
<dbReference type="PIR" id="AG0022">
    <property type="entry name" value="AG0022"/>
</dbReference>
<dbReference type="RefSeq" id="WP_002212301.1">
    <property type="nucleotide sequence ID" value="NZ_WUCM01000004.1"/>
</dbReference>
<dbReference type="RefSeq" id="YP_002345263.1">
    <property type="nucleotide sequence ID" value="NC_003143.1"/>
</dbReference>
<dbReference type="SMR" id="Q8ZJD4"/>
<dbReference type="STRING" id="214092.YPO0179"/>
<dbReference type="PaxDb" id="214092-YPO0179"/>
<dbReference type="DNASU" id="1148907"/>
<dbReference type="EnsemblBacteria" id="AAS60455">
    <property type="protein sequence ID" value="AAS60455"/>
    <property type="gene ID" value="YP_0178"/>
</dbReference>
<dbReference type="KEGG" id="ype:YPO0179"/>
<dbReference type="KEGG" id="ypk:y3960"/>
<dbReference type="KEGG" id="ypm:YP_0178"/>
<dbReference type="PATRIC" id="fig|214092.21.peg.411"/>
<dbReference type="eggNOG" id="COG3089">
    <property type="taxonomic scope" value="Bacteria"/>
</dbReference>
<dbReference type="HOGENOM" id="CLU_186759_1_0_6"/>
<dbReference type="OMA" id="MIIPWKE"/>
<dbReference type="OrthoDB" id="6120729at2"/>
<dbReference type="Proteomes" id="UP000000815">
    <property type="component" value="Chromosome"/>
</dbReference>
<dbReference type="Proteomes" id="UP000001019">
    <property type="component" value="Chromosome"/>
</dbReference>
<dbReference type="Proteomes" id="UP000002490">
    <property type="component" value="Chromosome"/>
</dbReference>
<dbReference type="Gene3D" id="1.10.10.610">
    <property type="entry name" value="YehU-like"/>
    <property type="match status" value="1"/>
</dbReference>
<dbReference type="HAMAP" id="MF_00690">
    <property type="entry name" value="UPF0270"/>
    <property type="match status" value="1"/>
</dbReference>
<dbReference type="InterPro" id="IPR010648">
    <property type="entry name" value="UPF0270"/>
</dbReference>
<dbReference type="InterPro" id="IPR036685">
    <property type="entry name" value="YehU-like_sf"/>
</dbReference>
<dbReference type="NCBIfam" id="NF003438">
    <property type="entry name" value="PRK04966.1"/>
    <property type="match status" value="1"/>
</dbReference>
<dbReference type="Pfam" id="PF06794">
    <property type="entry name" value="UPF0270"/>
    <property type="match status" value="1"/>
</dbReference>
<dbReference type="PIRSF" id="PIRSF006169">
    <property type="entry name" value="UCP006169"/>
    <property type="match status" value="1"/>
</dbReference>
<dbReference type="SUPFAM" id="SSF118001">
    <property type="entry name" value="YehU-like"/>
    <property type="match status" value="1"/>
</dbReference>
<accession>Q8ZJD4</accession>
<accession>Q0WKC5</accession>
<organism>
    <name type="scientific">Yersinia pestis</name>
    <dbReference type="NCBI Taxonomy" id="632"/>
    <lineage>
        <taxon>Bacteria</taxon>
        <taxon>Pseudomonadati</taxon>
        <taxon>Pseudomonadota</taxon>
        <taxon>Gammaproteobacteria</taxon>
        <taxon>Enterobacterales</taxon>
        <taxon>Yersiniaceae</taxon>
        <taxon>Yersinia</taxon>
    </lineage>
</organism>
<gene>
    <name type="ordered locus">YPO0179</name>
    <name type="ordered locus">y3960</name>
    <name type="ordered locus">YP_0178</name>
</gene>
<name>Y179_YERPE</name>
<proteinExistence type="inferred from homology"/>
<evidence type="ECO:0000255" key="1">
    <source>
        <dbReference type="HAMAP-Rule" id="MF_00690"/>
    </source>
</evidence>
<protein>
    <recommendedName>
        <fullName evidence="1">UPF0270 protein YPO0179/y3960/YP_0178</fullName>
    </recommendedName>
</protein>
<feature type="chain" id="PRO_0000214863" description="UPF0270 protein YPO0179/y3960/YP_0178">
    <location>
        <begin position="1"/>
        <end position="78"/>
    </location>
</feature>
<keyword id="KW-1185">Reference proteome</keyword>
<sequence length="78" mass="8926">MIIPWQQVDSETLDNLLEAFVLREGTDYGEHERSLTEKVADVRRQLVSGEAVLVWSELHETINIMPRGSFRAGAEEQQ</sequence>